<protein>
    <recommendedName>
        <fullName evidence="1">Large ribosomal subunit protein uL29</fullName>
    </recommendedName>
    <alternativeName>
        <fullName evidence="2">50S ribosomal protein L29</fullName>
    </alternativeName>
</protein>
<organism>
    <name type="scientific">Xanthomonas campestris pv. campestris (strain 8004)</name>
    <dbReference type="NCBI Taxonomy" id="314565"/>
    <lineage>
        <taxon>Bacteria</taxon>
        <taxon>Pseudomonadati</taxon>
        <taxon>Pseudomonadota</taxon>
        <taxon>Gammaproteobacteria</taxon>
        <taxon>Lysobacterales</taxon>
        <taxon>Lysobacteraceae</taxon>
        <taxon>Xanthomonas</taxon>
    </lineage>
</organism>
<reference key="1">
    <citation type="journal article" date="2005" name="Genome Res.">
        <title>Comparative and functional genomic analyses of the pathogenicity of phytopathogen Xanthomonas campestris pv. campestris.</title>
        <authorList>
            <person name="Qian W."/>
            <person name="Jia Y."/>
            <person name="Ren S.-X."/>
            <person name="He Y.-Q."/>
            <person name="Feng J.-X."/>
            <person name="Lu L.-F."/>
            <person name="Sun Q."/>
            <person name="Ying G."/>
            <person name="Tang D.-J."/>
            <person name="Tang H."/>
            <person name="Wu W."/>
            <person name="Hao P."/>
            <person name="Wang L."/>
            <person name="Jiang B.-L."/>
            <person name="Zeng S."/>
            <person name="Gu W.-Y."/>
            <person name="Lu G."/>
            <person name="Rong L."/>
            <person name="Tian Y."/>
            <person name="Yao Z."/>
            <person name="Fu G."/>
            <person name="Chen B."/>
            <person name="Fang R."/>
            <person name="Qiang B."/>
            <person name="Chen Z."/>
            <person name="Zhao G.-P."/>
            <person name="Tang J.-L."/>
            <person name="He C."/>
        </authorList>
    </citation>
    <scope>NUCLEOTIDE SEQUENCE [LARGE SCALE GENOMIC DNA]</scope>
    <source>
        <strain>8004</strain>
    </source>
</reference>
<gene>
    <name evidence="1" type="primary">rpmC</name>
    <name type="ordered locus">XC_3332</name>
</gene>
<feature type="chain" id="PRO_1000007654" description="Large ribosomal subunit protein uL29">
    <location>
        <begin position="1"/>
        <end position="61"/>
    </location>
</feature>
<sequence length="61" mass="7237">MDIKQLREKSADELKAHLTDLRKEQFSLRMQQVTGQLPKTHETRRVRREIARVKHLLGSTQ</sequence>
<comment type="similarity">
    <text evidence="1">Belongs to the universal ribosomal protein uL29 family.</text>
</comment>
<dbReference type="EMBL" id="CP000050">
    <property type="protein sequence ID" value="AAY50376.1"/>
    <property type="molecule type" value="Genomic_DNA"/>
</dbReference>
<dbReference type="RefSeq" id="WP_011036128.1">
    <property type="nucleotide sequence ID" value="NZ_CP155948.1"/>
</dbReference>
<dbReference type="SMR" id="Q4URE7"/>
<dbReference type="GeneID" id="58014521"/>
<dbReference type="KEGG" id="xcb:XC_3332"/>
<dbReference type="HOGENOM" id="CLU_158491_1_2_6"/>
<dbReference type="Proteomes" id="UP000000420">
    <property type="component" value="Chromosome"/>
</dbReference>
<dbReference type="GO" id="GO:0022625">
    <property type="term" value="C:cytosolic large ribosomal subunit"/>
    <property type="evidence" value="ECO:0007669"/>
    <property type="project" value="TreeGrafter"/>
</dbReference>
<dbReference type="GO" id="GO:0003735">
    <property type="term" value="F:structural constituent of ribosome"/>
    <property type="evidence" value="ECO:0007669"/>
    <property type="project" value="InterPro"/>
</dbReference>
<dbReference type="GO" id="GO:0006412">
    <property type="term" value="P:translation"/>
    <property type="evidence" value="ECO:0007669"/>
    <property type="project" value="UniProtKB-UniRule"/>
</dbReference>
<dbReference type="CDD" id="cd00427">
    <property type="entry name" value="Ribosomal_L29_HIP"/>
    <property type="match status" value="1"/>
</dbReference>
<dbReference type="FunFam" id="1.10.287.310:FF:000001">
    <property type="entry name" value="50S ribosomal protein L29"/>
    <property type="match status" value="1"/>
</dbReference>
<dbReference type="Gene3D" id="1.10.287.310">
    <property type="match status" value="1"/>
</dbReference>
<dbReference type="HAMAP" id="MF_00374">
    <property type="entry name" value="Ribosomal_uL29"/>
    <property type="match status" value="1"/>
</dbReference>
<dbReference type="InterPro" id="IPR050063">
    <property type="entry name" value="Ribosomal_protein_uL29"/>
</dbReference>
<dbReference type="InterPro" id="IPR001854">
    <property type="entry name" value="Ribosomal_uL29"/>
</dbReference>
<dbReference type="InterPro" id="IPR036049">
    <property type="entry name" value="Ribosomal_uL29_sf"/>
</dbReference>
<dbReference type="NCBIfam" id="TIGR00012">
    <property type="entry name" value="L29"/>
    <property type="match status" value="1"/>
</dbReference>
<dbReference type="PANTHER" id="PTHR10916">
    <property type="entry name" value="60S RIBOSOMAL PROTEIN L35/50S RIBOSOMAL PROTEIN L29"/>
    <property type="match status" value="1"/>
</dbReference>
<dbReference type="PANTHER" id="PTHR10916:SF0">
    <property type="entry name" value="LARGE RIBOSOMAL SUBUNIT PROTEIN UL29C"/>
    <property type="match status" value="1"/>
</dbReference>
<dbReference type="Pfam" id="PF00831">
    <property type="entry name" value="Ribosomal_L29"/>
    <property type="match status" value="1"/>
</dbReference>
<dbReference type="SUPFAM" id="SSF46561">
    <property type="entry name" value="Ribosomal protein L29 (L29p)"/>
    <property type="match status" value="1"/>
</dbReference>
<name>RL29_XANC8</name>
<accession>Q4URE7</accession>
<proteinExistence type="inferred from homology"/>
<keyword id="KW-0687">Ribonucleoprotein</keyword>
<keyword id="KW-0689">Ribosomal protein</keyword>
<evidence type="ECO:0000255" key="1">
    <source>
        <dbReference type="HAMAP-Rule" id="MF_00374"/>
    </source>
</evidence>
<evidence type="ECO:0000305" key="2"/>